<dbReference type="EMBL" id="AF095195">
    <property type="protein sequence ID" value="AAD16124.2"/>
    <property type="molecule type" value="mRNA"/>
</dbReference>
<dbReference type="EMBL" id="AB020680">
    <property type="protein sequence ID" value="BAA74896.1"/>
    <property type="status" value="ALT_INIT"/>
    <property type="molecule type" value="mRNA"/>
</dbReference>
<dbReference type="EMBL" id="AL139300">
    <property type="status" value="NOT_ANNOTATED_CDS"/>
    <property type="molecule type" value="Genomic_DNA"/>
</dbReference>
<dbReference type="EMBL" id="BC044216">
    <property type="protein sequence ID" value="AAH44216.2"/>
    <property type="molecule type" value="mRNA"/>
</dbReference>
<dbReference type="EMBL" id="BC050551">
    <property type="protein sequence ID" value="AAH50551.1"/>
    <property type="molecule type" value="mRNA"/>
</dbReference>
<dbReference type="CCDS" id="CCDS9982.1">
    <molecule id="Q9UL15-1"/>
</dbReference>
<dbReference type="RefSeq" id="NP_001015048.1">
    <molecule id="Q9UL15-1"/>
    <property type="nucleotide sequence ID" value="NM_001015048.3"/>
</dbReference>
<dbReference type="RefSeq" id="NP_001015049.2">
    <molecule id="Q9UL15-1"/>
    <property type="nucleotide sequence ID" value="NM_001015049.5"/>
</dbReference>
<dbReference type="RefSeq" id="NP_004864.1">
    <molecule id="Q9UL15-1"/>
    <property type="nucleotide sequence ID" value="NM_004873.4"/>
</dbReference>
<dbReference type="PDB" id="2D9D">
    <property type="method" value="NMR"/>
    <property type="chains" value="A=275-350"/>
</dbReference>
<dbReference type="PDB" id="3A8Y">
    <property type="method" value="X-ray"/>
    <property type="resolution" value="2.30 A"/>
    <property type="chains" value="C/D=341-447"/>
</dbReference>
<dbReference type="PDBsum" id="2D9D"/>
<dbReference type="PDBsum" id="3A8Y"/>
<dbReference type="SMR" id="Q9UL15"/>
<dbReference type="BioGRID" id="114905">
    <property type="interactions" value="380"/>
</dbReference>
<dbReference type="CORUM" id="Q9UL15"/>
<dbReference type="DIP" id="DIP-53428N"/>
<dbReference type="FunCoup" id="Q9UL15">
    <property type="interactions" value="2603"/>
</dbReference>
<dbReference type="IntAct" id="Q9UL15">
    <property type="interactions" value="156"/>
</dbReference>
<dbReference type="MINT" id="Q9UL15"/>
<dbReference type="STRING" id="9606.ENSP00000338814"/>
<dbReference type="GlyGen" id="Q9UL15">
    <property type="glycosylation" value="1 site, 1 O-linked glycan (1 site)"/>
</dbReference>
<dbReference type="iPTMnet" id="Q9UL15"/>
<dbReference type="MetOSite" id="Q9UL15"/>
<dbReference type="PhosphoSitePlus" id="Q9UL15"/>
<dbReference type="BioMuta" id="BAG5"/>
<dbReference type="DMDM" id="12643895"/>
<dbReference type="jPOST" id="Q9UL15"/>
<dbReference type="MassIVE" id="Q9UL15"/>
<dbReference type="PaxDb" id="9606-ENSP00000338814"/>
<dbReference type="PeptideAtlas" id="Q9UL15"/>
<dbReference type="ProteomicsDB" id="84927">
    <molecule id="Q9UL15-1"/>
</dbReference>
<dbReference type="ProteomicsDB" id="84928">
    <molecule id="Q9UL15-2"/>
</dbReference>
<dbReference type="Pumba" id="Q9UL15"/>
<dbReference type="Antibodypedia" id="36">
    <property type="antibodies" value="552 antibodies from 35 providers"/>
</dbReference>
<dbReference type="DNASU" id="9529"/>
<dbReference type="Ensembl" id="ENST00000299204.6">
    <molecule id="Q9UL15-1"/>
    <property type="protein sequence ID" value="ENSP00000299204.4"/>
    <property type="gene ID" value="ENSG00000166170.12"/>
</dbReference>
<dbReference type="Ensembl" id="ENST00000337322.5">
    <molecule id="Q9UL15-1"/>
    <property type="protein sequence ID" value="ENSP00000338814.5"/>
    <property type="gene ID" value="ENSG00000166170.12"/>
</dbReference>
<dbReference type="Ensembl" id="ENST00000445922.2">
    <molecule id="Q9UL15-1"/>
    <property type="protein sequence ID" value="ENSP00000391713.2"/>
    <property type="gene ID" value="ENSG00000166170.12"/>
</dbReference>
<dbReference type="GeneID" id="9529"/>
<dbReference type="KEGG" id="hsa:9529"/>
<dbReference type="MANE-Select" id="ENST00000299204.6">
    <property type="protein sequence ID" value="ENSP00000299204.4"/>
    <property type="RefSeq nucleotide sequence ID" value="NM_001015048.3"/>
    <property type="RefSeq protein sequence ID" value="NP_001015048.1"/>
</dbReference>
<dbReference type="UCSC" id="uc001ynh.3">
    <molecule id="Q9UL15-1"/>
    <property type="organism name" value="human"/>
</dbReference>
<dbReference type="AGR" id="HGNC:941"/>
<dbReference type="CTD" id="9529"/>
<dbReference type="DisGeNET" id="9529"/>
<dbReference type="GeneCards" id="BAG5"/>
<dbReference type="HGNC" id="HGNC:941">
    <property type="gene designation" value="BAG5"/>
</dbReference>
<dbReference type="HPA" id="ENSG00000166170">
    <property type="expression patterns" value="Tissue enriched (testis)"/>
</dbReference>
<dbReference type="MalaCards" id="BAG5"/>
<dbReference type="MIM" id="603885">
    <property type="type" value="gene"/>
</dbReference>
<dbReference type="MIM" id="619747">
    <property type="type" value="phenotype"/>
</dbReference>
<dbReference type="neXtProt" id="NX_Q9UL15"/>
<dbReference type="OpenTargets" id="ENSG00000166170"/>
<dbReference type="Orphanet" id="154">
    <property type="disease" value="Familial isolated dilated cardiomyopathy"/>
</dbReference>
<dbReference type="PharmGKB" id="PA25241"/>
<dbReference type="VEuPathDB" id="HostDB:ENSG00000166170"/>
<dbReference type="eggNOG" id="KOG4361">
    <property type="taxonomic scope" value="Eukaryota"/>
</dbReference>
<dbReference type="GeneTree" id="ENSGT00940000158888"/>
<dbReference type="HOGENOM" id="CLU_579940_0_0_1"/>
<dbReference type="InParanoid" id="Q9UL15"/>
<dbReference type="OMA" id="MGNQHPA"/>
<dbReference type="OrthoDB" id="417450at2759"/>
<dbReference type="PAN-GO" id="Q9UL15">
    <property type="GO annotations" value="9 GO annotations based on evolutionary models"/>
</dbReference>
<dbReference type="PhylomeDB" id="Q9UL15"/>
<dbReference type="TreeFam" id="TF102014"/>
<dbReference type="PathwayCommons" id="Q9UL15"/>
<dbReference type="Reactome" id="R-HSA-3371453">
    <property type="pathway name" value="Regulation of HSF1-mediated heat shock response"/>
</dbReference>
<dbReference type="SignaLink" id="Q9UL15"/>
<dbReference type="SIGNOR" id="Q9UL15"/>
<dbReference type="BioGRID-ORCS" id="9529">
    <property type="hits" value="4 hits in 1153 CRISPR screens"/>
</dbReference>
<dbReference type="CD-CODE" id="FB4E32DD">
    <property type="entry name" value="Presynaptic clusters and postsynaptic densities"/>
</dbReference>
<dbReference type="EvolutionaryTrace" id="Q9UL15"/>
<dbReference type="GeneWiki" id="BAG5"/>
<dbReference type="GenomeRNAi" id="9529"/>
<dbReference type="Pharos" id="Q9UL15">
    <property type="development level" value="Tbio"/>
</dbReference>
<dbReference type="PRO" id="PR:Q9UL15"/>
<dbReference type="Proteomes" id="UP000005640">
    <property type="component" value="Chromosome 14"/>
</dbReference>
<dbReference type="RNAct" id="Q9UL15">
    <property type="molecule type" value="protein"/>
</dbReference>
<dbReference type="Bgee" id="ENSG00000166170">
    <property type="expression patterns" value="Expressed in sperm and 207 other cell types or tissues"/>
</dbReference>
<dbReference type="ExpressionAtlas" id="Q9UL15">
    <property type="expression patterns" value="baseline and differential"/>
</dbReference>
<dbReference type="GO" id="GO:0005737">
    <property type="term" value="C:cytoplasm"/>
    <property type="evidence" value="ECO:0000318"/>
    <property type="project" value="GO_Central"/>
</dbReference>
<dbReference type="GO" id="GO:0005829">
    <property type="term" value="C:cytosol"/>
    <property type="evidence" value="ECO:0000314"/>
    <property type="project" value="ParkinsonsUK-UCL"/>
</dbReference>
<dbReference type="GO" id="GO:0016234">
    <property type="term" value="C:inclusion body"/>
    <property type="evidence" value="ECO:0000314"/>
    <property type="project" value="BHF-UCL"/>
</dbReference>
<dbReference type="GO" id="GO:0030314">
    <property type="term" value="C:junctional membrane complex"/>
    <property type="evidence" value="ECO:0000250"/>
    <property type="project" value="UniProtKB"/>
</dbReference>
<dbReference type="GO" id="GO:0016020">
    <property type="term" value="C:membrane"/>
    <property type="evidence" value="ECO:0007005"/>
    <property type="project" value="UniProtKB"/>
</dbReference>
<dbReference type="GO" id="GO:0005739">
    <property type="term" value="C:mitochondrion"/>
    <property type="evidence" value="ECO:0000314"/>
    <property type="project" value="ParkinsonsUK-UCL"/>
</dbReference>
<dbReference type="GO" id="GO:0005634">
    <property type="term" value="C:nucleus"/>
    <property type="evidence" value="ECO:0000314"/>
    <property type="project" value="ParkinsonsUK-UCL"/>
</dbReference>
<dbReference type="GO" id="GO:0048471">
    <property type="term" value="C:perinuclear region of cytoplasm"/>
    <property type="evidence" value="ECO:0000314"/>
    <property type="project" value="BHF-UCL"/>
</dbReference>
<dbReference type="GO" id="GO:0000774">
    <property type="term" value="F:adenyl-nucleotide exchange factor activity"/>
    <property type="evidence" value="ECO:0000318"/>
    <property type="project" value="GO_Central"/>
</dbReference>
<dbReference type="GO" id="GO:0019901">
    <property type="term" value="F:protein kinase binding"/>
    <property type="evidence" value="ECO:0000353"/>
    <property type="project" value="ParkinsonsUK-UCL"/>
</dbReference>
<dbReference type="GO" id="GO:0051087">
    <property type="term" value="F:protein-folding chaperone binding"/>
    <property type="evidence" value="ECO:0000353"/>
    <property type="project" value="BHF-UCL"/>
</dbReference>
<dbReference type="GO" id="GO:1990948">
    <property type="term" value="F:ubiquitin ligase inhibitor activity"/>
    <property type="evidence" value="ECO:0000250"/>
    <property type="project" value="BHF-UCL"/>
</dbReference>
<dbReference type="GO" id="GO:0031625">
    <property type="term" value="F:ubiquitin protein ligase binding"/>
    <property type="evidence" value="ECO:0000353"/>
    <property type="project" value="ParkinsonsUK-UCL"/>
</dbReference>
<dbReference type="GO" id="GO:0007030">
    <property type="term" value="P:Golgi organization"/>
    <property type="evidence" value="ECO:0000315"/>
    <property type="project" value="ParkinsonsUK-UCL"/>
</dbReference>
<dbReference type="GO" id="GO:0010977">
    <property type="term" value="P:negative regulation of neuron projection development"/>
    <property type="evidence" value="ECO:0000314"/>
    <property type="project" value="ParkinsonsUK-UCL"/>
</dbReference>
<dbReference type="GO" id="GO:1902176">
    <property type="term" value="P:negative regulation of oxidative stress-induced intrinsic apoptotic signaling pathway"/>
    <property type="evidence" value="ECO:0000314"/>
    <property type="project" value="ParkinsonsUK-UCL"/>
</dbReference>
<dbReference type="GO" id="GO:0032435">
    <property type="term" value="P:negative regulation of proteasomal ubiquitin-dependent protein catabolic process"/>
    <property type="evidence" value="ECO:0000314"/>
    <property type="project" value="ParkinsonsUK-UCL"/>
</dbReference>
<dbReference type="GO" id="GO:0061084">
    <property type="term" value="P:negative regulation of protein refolding"/>
    <property type="evidence" value="ECO:0000250"/>
    <property type="project" value="BHF-UCL"/>
</dbReference>
<dbReference type="GO" id="GO:0031397">
    <property type="term" value="P:negative regulation of protein ubiquitination"/>
    <property type="evidence" value="ECO:0000314"/>
    <property type="project" value="ARUK-UCL"/>
</dbReference>
<dbReference type="GO" id="GO:0006457">
    <property type="term" value="P:protein folding"/>
    <property type="evidence" value="ECO:0000304"/>
    <property type="project" value="ProtInc"/>
</dbReference>
<dbReference type="GO" id="GO:0050821">
    <property type="term" value="P:protein stabilization"/>
    <property type="evidence" value="ECO:0000314"/>
    <property type="project" value="ARUK-UCL"/>
</dbReference>
<dbReference type="GO" id="GO:0090083">
    <property type="term" value="P:regulation of inclusion body assembly"/>
    <property type="evidence" value="ECO:0000315"/>
    <property type="project" value="BHF-UCL"/>
</dbReference>
<dbReference type="GO" id="GO:0051438">
    <property type="term" value="P:regulation of ubiquitin-protein transferase activity"/>
    <property type="evidence" value="ECO:0000304"/>
    <property type="project" value="ParkinsonsUK-UCL"/>
</dbReference>
<dbReference type="FunFam" id="1.20.58.120:FF:000002">
    <property type="entry name" value="BAG family molecular chaperone regulator 5"/>
    <property type="match status" value="1"/>
</dbReference>
<dbReference type="FunFam" id="1.20.58.120:FF:000003">
    <property type="entry name" value="BAG family molecular chaperone regulator 5"/>
    <property type="match status" value="1"/>
</dbReference>
<dbReference type="FunFam" id="1.20.58.120:FF:000004">
    <property type="entry name" value="BAG family molecular chaperone regulator 5"/>
    <property type="match status" value="1"/>
</dbReference>
<dbReference type="FunFam" id="1.20.58.120:FF:000008">
    <property type="entry name" value="BAG family molecular chaperone regulator 5"/>
    <property type="match status" value="1"/>
</dbReference>
<dbReference type="FunFam" id="1.20.58.120:FF:000009">
    <property type="entry name" value="BAG family molecular chaperone regulator 5"/>
    <property type="match status" value="1"/>
</dbReference>
<dbReference type="Gene3D" id="1.20.58.120">
    <property type="entry name" value="BAG domain"/>
    <property type="match status" value="5"/>
</dbReference>
<dbReference type="InterPro" id="IPR039773">
    <property type="entry name" value="BAG_chaperone_regulator"/>
</dbReference>
<dbReference type="InterPro" id="IPR036533">
    <property type="entry name" value="BAG_dom_sf"/>
</dbReference>
<dbReference type="InterPro" id="IPR003103">
    <property type="entry name" value="BAG_domain"/>
</dbReference>
<dbReference type="PANTHER" id="PTHR12329:SF2">
    <property type="entry name" value="BAG FAMILY MOLECULAR CHAPERONE REGULATOR 5"/>
    <property type="match status" value="1"/>
</dbReference>
<dbReference type="PANTHER" id="PTHR12329">
    <property type="entry name" value="BCL2-ASSOCIATED ATHANOGENE"/>
    <property type="match status" value="1"/>
</dbReference>
<dbReference type="Pfam" id="PF02179">
    <property type="entry name" value="BAG"/>
    <property type="match status" value="4"/>
</dbReference>
<dbReference type="SMART" id="SM00264">
    <property type="entry name" value="BAG"/>
    <property type="match status" value="4"/>
</dbReference>
<dbReference type="SUPFAM" id="SSF63491">
    <property type="entry name" value="BAG domain"/>
    <property type="match status" value="4"/>
</dbReference>
<dbReference type="PROSITE" id="PS51035">
    <property type="entry name" value="BAG"/>
    <property type="match status" value="4"/>
</dbReference>
<name>BAG5_HUMAN</name>
<feature type="chain" id="PRO_0000088872" description="BAG family molecular chaperone regulator 5">
    <location>
        <begin position="1"/>
        <end position="447"/>
    </location>
</feature>
<feature type="domain" description="BAG 1" evidence="3">
    <location>
        <begin position="9"/>
        <end position="86"/>
    </location>
</feature>
<feature type="domain" description="BAG 2" evidence="3">
    <location>
        <begin position="95"/>
        <end position="167"/>
    </location>
</feature>
<feature type="domain" description="BAG 3" evidence="3">
    <location>
        <begin position="182"/>
        <end position="260"/>
    </location>
</feature>
<feature type="domain" description="BAG 4" evidence="3">
    <location>
        <begin position="275"/>
        <end position="350"/>
    </location>
</feature>
<feature type="domain" description="BAG 5" evidence="3">
    <location>
        <begin position="365"/>
        <end position="442"/>
    </location>
</feature>
<feature type="splice variant" id="VSP_037996" description="In isoform 2." evidence="7">
    <original>M</original>
    <variation>MRFHWLPTLSEPFDRNQELETCIRPLWTPSGSACETEHNKSM</variation>
    <location>
        <position position="1"/>
    </location>
</feature>
<feature type="sequence variant" id="VAR_058712" description="In dbSNP:rs17854644." evidence="4">
    <original>C</original>
    <variation>W</variation>
    <location>
        <position position="157"/>
    </location>
</feature>
<feature type="sequence variant" id="VAR_086932" description="In CMD2F." evidence="6">
    <location>
        <begin position="197"/>
        <end position="447"/>
    </location>
</feature>
<feature type="sequence variant" id="VAR_086933" description="In CMD2F; loss of interaction with HSPA8." evidence="6">
    <location>
        <begin position="390"/>
        <end position="447"/>
    </location>
</feature>
<feature type="helix" evidence="9">
    <location>
        <begin position="277"/>
        <end position="295"/>
    </location>
</feature>
<feature type="turn" evidence="9">
    <location>
        <begin position="299"/>
        <end position="301"/>
    </location>
</feature>
<feature type="helix" evidence="9">
    <location>
        <begin position="302"/>
        <end position="317"/>
    </location>
</feature>
<feature type="helix" evidence="9">
    <location>
        <begin position="318"/>
        <end position="320"/>
    </location>
</feature>
<feature type="helix" evidence="9">
    <location>
        <begin position="326"/>
        <end position="350"/>
    </location>
</feature>
<feature type="turn" evidence="10">
    <location>
        <begin position="356"/>
        <end position="358"/>
    </location>
</feature>
<feature type="helix" evidence="10">
    <location>
        <begin position="364"/>
        <end position="384"/>
    </location>
</feature>
<feature type="helix" evidence="10">
    <location>
        <begin position="393"/>
        <end position="410"/>
    </location>
</feature>
<feature type="helix" evidence="10">
    <location>
        <begin position="418"/>
        <end position="442"/>
    </location>
</feature>
<organism>
    <name type="scientific">Homo sapiens</name>
    <name type="common">Human</name>
    <dbReference type="NCBI Taxonomy" id="9606"/>
    <lineage>
        <taxon>Eukaryota</taxon>
        <taxon>Metazoa</taxon>
        <taxon>Chordata</taxon>
        <taxon>Craniata</taxon>
        <taxon>Vertebrata</taxon>
        <taxon>Euteleostomi</taxon>
        <taxon>Mammalia</taxon>
        <taxon>Eutheria</taxon>
        <taxon>Euarchontoglires</taxon>
        <taxon>Primates</taxon>
        <taxon>Haplorrhini</taxon>
        <taxon>Catarrhini</taxon>
        <taxon>Hominidae</taxon>
        <taxon>Homo</taxon>
    </lineage>
</organism>
<accession>Q9UL15</accession>
<accession>O94950</accession>
<accession>Q86W59</accession>
<sequence>MDMGNQHPSISRLQEIQKEVKSVEQQVIGFSGLSDDKNYKKLERILTKQLFEIDSVDTEGKGDIQQARKRAAQETERLLKELEQNANHPHRIEIQNIFEEAQSLVREKIVPFYNGGNCVTDEFEEGIQDIILRLTHVKTGGKISLRKARYHTLTKICAVQEIIEDCMKKQPSLPLSEDAHPSVAKINFVMCEVNKARGVLIALLMGVNNNETCRHLSCVLSGLIADLDALDVCGRTEIRNYRREVVEDINKLLKYLDLEEEADTTKAFDLRQNHSILKIEKVLKRMREIKNELLQAQNPSELYLSSKTELQGLIGQLDEVSLEKNPCIREARRRAVIEVQTLITYIDLKEALEKRKLFACEEHPSHKAVWNVLGNLSEIQGEVLSFDGNRTDKNYIRLEELLTKQLLALDAVDPQGEEKCKAARKQAVRLAQNILSYLDLKSDEWEY</sequence>
<keyword id="KW-0002">3D-structure</keyword>
<keyword id="KW-0025">Alternative splicing</keyword>
<keyword id="KW-0122">Cardiomyopathy</keyword>
<keyword id="KW-0143">Chaperone</keyword>
<keyword id="KW-0225">Disease variant</keyword>
<keyword id="KW-1267">Proteomics identification</keyword>
<keyword id="KW-1185">Reference proteome</keyword>
<keyword id="KW-0677">Repeat</keyword>
<protein>
    <recommendedName>
        <fullName>BAG family molecular chaperone regulator 5</fullName>
        <shortName>BAG-5</shortName>
    </recommendedName>
    <alternativeName>
        <fullName>Bcl-2-associated athanogene 5</fullName>
    </alternativeName>
</protein>
<gene>
    <name type="primary">BAG5</name>
    <name type="synonym">KIAA0873</name>
</gene>
<evidence type="ECO:0000250" key="1">
    <source>
        <dbReference type="UniProtKB" id="Q5QJC9"/>
    </source>
</evidence>
<evidence type="ECO:0000250" key="2">
    <source>
        <dbReference type="UniProtKB" id="Q8CI32"/>
    </source>
</evidence>
<evidence type="ECO:0000255" key="3">
    <source>
        <dbReference type="PROSITE-ProRule" id="PRU00369"/>
    </source>
</evidence>
<evidence type="ECO:0000269" key="4">
    <source>
    </source>
</evidence>
<evidence type="ECO:0000269" key="5">
    <source>
    </source>
</evidence>
<evidence type="ECO:0000269" key="6">
    <source>
    </source>
</evidence>
<evidence type="ECO:0000303" key="7">
    <source>
    </source>
</evidence>
<evidence type="ECO:0000305" key="8"/>
<evidence type="ECO:0007829" key="9">
    <source>
        <dbReference type="PDB" id="2D9D"/>
    </source>
</evidence>
<evidence type="ECO:0007829" key="10">
    <source>
        <dbReference type="PDB" id="3A8Y"/>
    </source>
</evidence>
<proteinExistence type="evidence at protein level"/>
<reference key="1">
    <citation type="journal article" date="1999" name="J. Biol. Chem.">
        <title>An evolutionarily conserved family of Hsp70/Hsc70 molecular chaperone regulators.</title>
        <authorList>
            <person name="Takayama S."/>
            <person name="Xie Z."/>
            <person name="Reed J.C."/>
        </authorList>
    </citation>
    <scope>NUCLEOTIDE SEQUENCE [MRNA] (ISOFORM 1)</scope>
</reference>
<reference key="2">
    <citation type="journal article" date="1998" name="DNA Res.">
        <title>Prediction of the coding sequences of unidentified human genes. XII. The complete sequences of 100 new cDNA clones from brain which code for large proteins in vitro.</title>
        <authorList>
            <person name="Nagase T."/>
            <person name="Ishikawa K."/>
            <person name="Suyama M."/>
            <person name="Kikuno R."/>
            <person name="Hirosawa M."/>
            <person name="Miyajima N."/>
            <person name="Tanaka A."/>
            <person name="Kotani H."/>
            <person name="Nomura N."/>
            <person name="Ohara O."/>
        </authorList>
    </citation>
    <scope>NUCLEOTIDE SEQUENCE [LARGE SCALE MRNA] (ISOFORM 1)</scope>
    <source>
        <tissue>Brain</tissue>
    </source>
</reference>
<reference key="3">
    <citation type="journal article" date="2003" name="Nature">
        <title>The DNA sequence and analysis of human chromosome 14.</title>
        <authorList>
            <person name="Heilig R."/>
            <person name="Eckenberg R."/>
            <person name="Petit J.-L."/>
            <person name="Fonknechten N."/>
            <person name="Da Silva C."/>
            <person name="Cattolico L."/>
            <person name="Levy M."/>
            <person name="Barbe V."/>
            <person name="De Berardinis V."/>
            <person name="Ureta-Vidal A."/>
            <person name="Pelletier E."/>
            <person name="Vico V."/>
            <person name="Anthouard V."/>
            <person name="Rowen L."/>
            <person name="Madan A."/>
            <person name="Qin S."/>
            <person name="Sun H."/>
            <person name="Du H."/>
            <person name="Pepin K."/>
            <person name="Artiguenave F."/>
            <person name="Robert C."/>
            <person name="Cruaud C."/>
            <person name="Bruels T."/>
            <person name="Jaillon O."/>
            <person name="Friedlander L."/>
            <person name="Samson G."/>
            <person name="Brottier P."/>
            <person name="Cure S."/>
            <person name="Segurens B."/>
            <person name="Aniere F."/>
            <person name="Samain S."/>
            <person name="Crespeau H."/>
            <person name="Abbasi N."/>
            <person name="Aiach N."/>
            <person name="Boscus D."/>
            <person name="Dickhoff R."/>
            <person name="Dors M."/>
            <person name="Dubois I."/>
            <person name="Friedman C."/>
            <person name="Gouyvenoux M."/>
            <person name="James R."/>
            <person name="Madan A."/>
            <person name="Mairey-Estrada B."/>
            <person name="Mangenot S."/>
            <person name="Martins N."/>
            <person name="Menard M."/>
            <person name="Oztas S."/>
            <person name="Ratcliffe A."/>
            <person name="Shaffer T."/>
            <person name="Trask B."/>
            <person name="Vacherie B."/>
            <person name="Bellemere C."/>
            <person name="Belser C."/>
            <person name="Besnard-Gonnet M."/>
            <person name="Bartol-Mavel D."/>
            <person name="Boutard M."/>
            <person name="Briez-Silla S."/>
            <person name="Combette S."/>
            <person name="Dufosse-Laurent V."/>
            <person name="Ferron C."/>
            <person name="Lechaplais C."/>
            <person name="Louesse C."/>
            <person name="Muselet D."/>
            <person name="Magdelenat G."/>
            <person name="Pateau E."/>
            <person name="Petit E."/>
            <person name="Sirvain-Trukniewicz P."/>
            <person name="Trybou A."/>
            <person name="Vega-Czarny N."/>
            <person name="Bataille E."/>
            <person name="Bluet E."/>
            <person name="Bordelais I."/>
            <person name="Dubois M."/>
            <person name="Dumont C."/>
            <person name="Guerin T."/>
            <person name="Haffray S."/>
            <person name="Hammadi R."/>
            <person name="Muanga J."/>
            <person name="Pellouin V."/>
            <person name="Robert D."/>
            <person name="Wunderle E."/>
            <person name="Gauguet G."/>
            <person name="Roy A."/>
            <person name="Sainte-Marthe L."/>
            <person name="Verdier J."/>
            <person name="Verdier-Discala C."/>
            <person name="Hillier L.W."/>
            <person name="Fulton L."/>
            <person name="McPherson J."/>
            <person name="Matsuda F."/>
            <person name="Wilson R."/>
            <person name="Scarpelli C."/>
            <person name="Gyapay G."/>
            <person name="Wincker P."/>
            <person name="Saurin W."/>
            <person name="Quetier F."/>
            <person name="Waterston R."/>
            <person name="Hood L."/>
            <person name="Weissenbach J."/>
        </authorList>
    </citation>
    <scope>NUCLEOTIDE SEQUENCE [LARGE SCALE GENOMIC DNA]</scope>
</reference>
<reference key="4">
    <citation type="journal article" date="2004" name="Genome Res.">
        <title>The status, quality, and expansion of the NIH full-length cDNA project: the Mammalian Gene Collection (MGC).</title>
        <authorList>
            <consortium name="The MGC Project Team"/>
        </authorList>
    </citation>
    <scope>NUCLEOTIDE SEQUENCE [LARGE SCALE MRNA] (ISOFORMS 1 AND 2)</scope>
    <scope>VARIANT TRP-157</scope>
    <source>
        <tissue>Brain</tissue>
    </source>
</reference>
<reference key="5">
    <citation type="journal article" date="2011" name="BMC Syst. Biol.">
        <title>Initial characterization of the human central proteome.</title>
        <authorList>
            <person name="Burkard T.R."/>
            <person name="Planyavsky M."/>
            <person name="Kaupe I."/>
            <person name="Breitwieser F.P."/>
            <person name="Buerckstuemmer T."/>
            <person name="Bennett K.L."/>
            <person name="Superti-Furga G."/>
            <person name="Colinge J."/>
        </authorList>
    </citation>
    <scope>IDENTIFICATION BY MASS SPECTROMETRY [LARGE SCALE ANALYSIS]</scope>
</reference>
<reference key="6">
    <citation type="journal article" date="2013" name="Nature">
        <title>High-content genome-wide RNAi screens identify regulators of parkin upstream of mitophagy.</title>
        <authorList>
            <person name="Hasson S.A."/>
            <person name="Kane L.A."/>
            <person name="Yamano K."/>
            <person name="Huang C.H."/>
            <person name="Sliter D.A."/>
            <person name="Buehler E."/>
            <person name="Wang C."/>
            <person name="Heman-Ackah S.M."/>
            <person name="Hessa T."/>
            <person name="Guha R."/>
            <person name="Martin S.E."/>
            <person name="Youle R.J."/>
        </authorList>
    </citation>
    <scope>INTERACTION WITH PRKN</scope>
</reference>
<reference key="7">
    <citation type="journal article" date="2010" name="Structure">
        <title>The C-terminal BAG domain of BAG5 induces conformational changes of the Hsp70 nucleotide-binding domain for ADP-ATP exchange.</title>
        <authorList>
            <person name="Arakawa A."/>
            <person name="Handa N."/>
            <person name="Ohsawa N."/>
            <person name="Shida M."/>
            <person name="Kigawa T."/>
            <person name="Hayashi F."/>
            <person name="Shirouzu M."/>
            <person name="Yokoyama S."/>
        </authorList>
    </citation>
    <scope>STRUCTURE BY NMR OF 275-350</scope>
    <scope>X-RAY CRYSTALLOGRAPHY (2.3 ANGSTROMS) OF 341-447 IN COMPLEX WITH HSPA1</scope>
    <scope>DOMAIN BAG</scope>
    <scope>FUNCTION</scope>
    <scope>SUBUNIT</scope>
</reference>
<reference key="8">
    <citation type="journal article" date="2022" name="Sci. Transl. Med.">
        <title>Loss-of-function mutations in the co-chaperone protein BAG5 cause dilated cardiomyopathy requiring heart transplantation.</title>
        <authorList>
            <person name="Hakui H."/>
            <person name="Kioka H."/>
            <person name="Miyashita Y."/>
            <person name="Nishimura S."/>
            <person name="Matsuoka K."/>
            <person name="Kato H."/>
            <person name="Tsukamoto O."/>
            <person name="Kuramoto Y."/>
            <person name="Takuwa A."/>
            <person name="Takahashi Y."/>
            <person name="Saito S."/>
            <person name="Ohta K."/>
            <person name="Asanuma H."/>
            <person name="Fu H.Y."/>
            <person name="Shinomiya H."/>
            <person name="Yamada N."/>
            <person name="Ohtani T."/>
            <person name="Sawa Y."/>
            <person name="Kitakaze M."/>
            <person name="Takashima S."/>
            <person name="Sakata Y."/>
            <person name="Asano Y."/>
        </authorList>
    </citation>
    <scope>VARIANTS CMD2F 197-ARG--TYR-447 DEL AND 390-ARG--TYR-447 DEL</scope>
    <scope>CHARACTERIZATION OF VARIANT CMD2F 390-ARG--TYR-447 DEL</scope>
    <scope>INVOLVEMENT IN CMD2F</scope>
    <scope>INTERACTION WITH HSPA8 AND JPH2</scope>
    <scope>TISSUE SPECIFICITY</scope>
</reference>
<comment type="function">
    <text evidence="1 2 5">Co-chaperone for HSP/HSP70 proteins. It functions as a nucleotide-exchange factor promoting the release of ADP from HSP70, thereby activating HSP70-mediated protein refolding (PubMed:20223214). Has an essential role in maintaining proteostasis at junctional membrane complexes (JMC), where it may function as a scaffold between the HSPA8 chaperone and JMC proteins enabling correct, HSPA8-dependent JMC protein folding (By similarity). Inhibits both auto-ubiquitination of PRKN and ubiquitination of target proteins by PRKN (By similarity).</text>
</comment>
<comment type="subunit">
    <text evidence="5 6">Binds to the ATPase domain of HSP/HSP70 chaperones. Binds PRKN. Interacts with HSPA8 and JPH2 (PubMed:35044787).</text>
</comment>
<comment type="interaction">
    <interactant intactId="EBI-356517">
        <id>Q9UL15</id>
    </interactant>
    <interactant intactId="EBI-744695">
        <id>Q8N9N5</id>
        <label>BANP</label>
    </interactant>
    <organismsDiffer>false</organismsDiffer>
    <experiments>3</experiments>
</comment>
<comment type="interaction">
    <interactant intactId="EBI-356517">
        <id>Q9UL15</id>
    </interactant>
    <interactant intactId="EBI-5278764">
        <id>Q96GN5</id>
        <label>CDCA7L</label>
    </interactant>
    <organismsDiffer>false</organismsDiffer>
    <experiments>3</experiments>
</comment>
<comment type="interaction">
    <interactant intactId="EBI-356517">
        <id>Q9UL15</id>
    </interactant>
    <interactant intactId="EBI-1055572">
        <id>P17661</id>
        <label>DES</label>
    </interactant>
    <organismsDiffer>false</organismsDiffer>
    <experiments>3</experiments>
</comment>
<comment type="interaction">
    <interactant intactId="EBI-356517">
        <id>Q9UL15</id>
    </interactant>
    <interactant intactId="EBI-536772">
        <id>Q12805</id>
        <label>EFEMP1</label>
    </interactant>
    <organismsDiffer>false</organismsDiffer>
    <experiments>3</experiments>
</comment>
<comment type="interaction">
    <interactant intactId="EBI-356517">
        <id>Q9UL15</id>
    </interactant>
    <interactant intactId="EBI-726822">
        <id>Q9BPY3</id>
        <label>FAM118B</label>
    </interactant>
    <organismsDiffer>false</organismsDiffer>
    <experiments>3</experiments>
</comment>
<comment type="interaction">
    <interactant intactId="EBI-356517">
        <id>Q9UL15</id>
    </interactant>
    <interactant intactId="EBI-11163335">
        <id>Q9NYA3</id>
        <label>GOLGA6A</label>
    </interactant>
    <organismsDiffer>false</organismsDiffer>
    <experiments>3</experiments>
</comment>
<comment type="interaction">
    <interactant intactId="EBI-356517">
        <id>Q9UL15</id>
    </interactant>
    <interactant intactId="EBI-629985">
        <id>P08107</id>
        <label>HSPA1B</label>
    </interactant>
    <organismsDiffer>false</organismsDiffer>
    <experiments>6</experiments>
</comment>
<comment type="interaction">
    <interactant intactId="EBI-356517">
        <id>Q9UL15</id>
    </interactant>
    <interactant intactId="EBI-749265">
        <id>Q8N6L0</id>
        <label>KASH5</label>
    </interactant>
    <organismsDiffer>false</organismsDiffer>
    <experiments>6</experiments>
</comment>
<comment type="interaction">
    <interactant intactId="EBI-356517">
        <id>Q9UL15</id>
    </interactant>
    <interactant intactId="EBI-11963072">
        <id>Q6L8H1</id>
        <label>KRTAP5-4</label>
    </interactant>
    <organismsDiffer>false</organismsDiffer>
    <experiments>3</experiments>
</comment>
<comment type="interaction">
    <interactant intactId="EBI-356517">
        <id>Q9UL15</id>
    </interactant>
    <interactant intactId="EBI-11973993">
        <id>Q5TA81</id>
        <label>LCE2C</label>
    </interactant>
    <organismsDiffer>false</organismsDiffer>
    <experiments>3</experiments>
</comment>
<comment type="interaction">
    <interactant intactId="EBI-356517">
        <id>Q9UL15</id>
    </interactant>
    <interactant intactId="EBI-1050422">
        <id>Q38SD2</id>
        <label>LRRK1</label>
    </interactant>
    <organismsDiffer>false</organismsDiffer>
    <experiments>3</experiments>
</comment>
<comment type="interaction">
    <interactant intactId="EBI-356517">
        <id>Q9UL15</id>
    </interactant>
    <interactant intactId="EBI-5323863">
        <id>Q5S007</id>
        <label>LRRK2</label>
    </interactant>
    <organismsDiffer>false</organismsDiffer>
    <experiments>12</experiments>
</comment>
<comment type="interaction">
    <interactant intactId="EBI-356517">
        <id>Q9UL15</id>
    </interactant>
    <interactant intactId="EBI-742610">
        <id>Q9Y6D9</id>
        <label>MAD1L1</label>
    </interactant>
    <organismsDiffer>false</organismsDiffer>
    <experiments>9</experiments>
</comment>
<comment type="interaction">
    <interactant intactId="EBI-356517">
        <id>Q9UL15</id>
    </interactant>
    <interactant intactId="EBI-741515">
        <id>Q9NVV9</id>
        <label>THAP1</label>
    </interactant>
    <organismsDiffer>false</organismsDiffer>
    <experiments>7</experiments>
</comment>
<comment type="interaction">
    <interactant intactId="EBI-356517">
        <id>Q9UL15</id>
    </interactant>
    <interactant intactId="EBI-12117154">
        <id>O60784-2</id>
        <label>TOM1</label>
    </interactant>
    <organismsDiffer>false</organismsDiffer>
    <experiments>3</experiments>
</comment>
<comment type="interaction">
    <interactant intactId="EBI-356517">
        <id>Q9UL15</id>
    </interactant>
    <interactant intactId="EBI-719493">
        <id>P14373</id>
        <label>TRIM27</label>
    </interactant>
    <organismsDiffer>false</organismsDiffer>
    <experiments>6</experiments>
</comment>
<comment type="interaction">
    <interactant intactId="EBI-356517">
        <id>Q9UL15</id>
    </interactant>
    <interactant intactId="EBI-9356749">
        <id>Q53FC7</id>
    </interactant>
    <organismsDiffer>false</organismsDiffer>
    <experiments>2</experiments>
</comment>
<comment type="subcellular location">
    <text evidence="2">In cardiomyocytes, localized at specialized membrane contact sites between T-tubules and the sarcoplasmic reticulum, known as junctional membrane complexes.</text>
</comment>
<comment type="alternative products">
    <event type="alternative splicing"/>
    <isoform>
        <id>Q9UL15-1</id>
        <name>1</name>
        <sequence type="displayed"/>
    </isoform>
    <isoform>
        <id>Q9UL15-2</id>
        <name>2</name>
        <sequence type="described" ref="VSP_037996"/>
    </isoform>
</comment>
<comment type="tissue specificity">
    <text evidence="6">Expressed in the heart.</text>
</comment>
<comment type="domain">
    <text evidence="5">The fifth BAG domain is responsible for the interaction with HSP70 nucleotide-binding domain.</text>
</comment>
<comment type="disease" evidence="6">
    <disease id="DI-06345">
        <name>Cardiomyopathy, dilated, 2F</name>
        <acronym>CMD2F</acronym>
        <description>A form of dilated cardiomyopathy, a disorder characterized by ventricular dilation and impaired systolic function, resulting in congestive heart failure and arrhythmia. Patients are at risk of premature death. CMD2F is an autosomal recessive, early-onset form.</description>
        <dbReference type="MIM" id="619747"/>
    </disease>
    <text>The disease is caused by variants affecting the gene represented in this entry.</text>
</comment>
<comment type="sequence caution" evidence="8">
    <conflict type="erroneous initiation">
        <sequence resource="EMBL-CDS" id="BAA74896"/>
    </conflict>
</comment>